<evidence type="ECO:0000250" key="1">
    <source>
        <dbReference type="UniProtKB" id="Q07457"/>
    </source>
</evidence>
<evidence type="ECO:0000255" key="2"/>
<evidence type="ECO:0000255" key="3">
    <source>
        <dbReference type="PROSITE-ProRule" id="PRU00175"/>
    </source>
</evidence>
<evidence type="ECO:0000256" key="4">
    <source>
        <dbReference type="SAM" id="MobiDB-lite"/>
    </source>
</evidence>
<evidence type="ECO:0000305" key="5"/>
<gene>
    <name type="primary">BRE1</name>
    <name type="ordered locus">CAGL0D00638g</name>
</gene>
<name>BRE1_CANGA</name>
<comment type="function">
    <text evidence="1">E3 ubiquitin-protein ligase that mediates monoubiquitination of histone H2B to form H2BK123ub1. H2BK123ub1 gives a specific tag for epigenetic transcriptional activation and is also a prerequisite for H3K4me and H3K79me formation.</text>
</comment>
<comment type="catalytic activity">
    <reaction evidence="1">
        <text>S-ubiquitinyl-[E2 ubiquitin-conjugating enzyme]-L-cysteine + [acceptor protein]-L-lysine = [E2 ubiquitin-conjugating enzyme]-L-cysteine + N(6)-ubiquitinyl-[acceptor protein]-L-lysine.</text>
        <dbReference type="EC" id="2.3.2.27"/>
    </reaction>
</comment>
<comment type="pathway">
    <text>Protein modification; protein ubiquitination.</text>
</comment>
<comment type="subcellular location">
    <subcellularLocation>
        <location evidence="1">Nucleus</location>
    </subcellularLocation>
</comment>
<comment type="similarity">
    <text evidence="5">Belongs to the BRE1 family.</text>
</comment>
<sequence length="693" mass="79771">MSSEEPPIKKQKLELSDPDEPLTQHDVISFQKEALFRCLNSKRVELEALTKQYSTVHDKWEQNVHTLATLMSVLSTAASHLRGLCNEESEKTLCDEMINAGESVDKERTDEFLNLLRKYTNSNGSSDSKIDSLGLELQRANKTKSELRLQNKKLTDEIDSLKAYYHGLVRSYDREDSMTVKRVFNKQKTDDNTDNISNTEQRPTSVSPVLTNGATHVKNEVKTEQEALNNHTDSSQSSGITEEEKKKLFLQYENKITDLESHNSSLNRIIEELENYKQLNEKELAQTRLEISNLLSEKHSNEEEREDLLHQIEKLKASNTDLTLTNESFLSKFQELAKEKDTFQEKISSDFEKTLESLKAQNLALEKDLVRVRTTRDELISKVAILEAETSKSVLISDLKQALDILRDQWEKIEFRNNQSPSSDALLKEIQDLESAFKELSSLTHKKYSEYLNHESVISKLTIEKTKADQKYFASMRSKDSILVENKNLSKSLNKANELILQLKDTDKLYKQKIESLHKQLALSQNNEKRLVDSNKAANLKVMNLNSEIQKQKKLLDFTSSQKNELINELTEANGMLKSKELEIEFKENELQTALKKNEKLEEFLSKENYNMNKPSSLATTNLDEDSMAEELENFRTLVYCSLCSKNWKNMAIRTCGHVFCEDCCKERLAARMRKCPTCNKPFSSNDLLMVHL</sequence>
<proteinExistence type="inferred from homology"/>
<keyword id="KW-0156">Chromatin regulator</keyword>
<keyword id="KW-0175">Coiled coil</keyword>
<keyword id="KW-0479">Metal-binding</keyword>
<keyword id="KW-0539">Nucleus</keyword>
<keyword id="KW-1185">Reference proteome</keyword>
<keyword id="KW-0808">Transferase</keyword>
<keyword id="KW-0833">Ubl conjugation pathway</keyword>
<keyword id="KW-0862">Zinc</keyword>
<keyword id="KW-0863">Zinc-finger</keyword>
<feature type="chain" id="PRO_0000055849" description="E3 ubiquitin-protein ligase BRE1">
    <location>
        <begin position="1"/>
        <end position="693"/>
    </location>
</feature>
<feature type="zinc finger region" description="RING-type" evidence="3">
    <location>
        <begin position="641"/>
        <end position="680"/>
    </location>
</feature>
<feature type="region of interest" description="Disordered" evidence="4">
    <location>
        <begin position="1"/>
        <end position="20"/>
    </location>
</feature>
<feature type="region of interest" description="Disordered" evidence="4">
    <location>
        <begin position="185"/>
        <end position="210"/>
    </location>
</feature>
<feature type="coiled-coil region" evidence="2">
    <location>
        <begin position="127"/>
        <end position="166"/>
    </location>
</feature>
<feature type="coiled-coil region" evidence="2">
    <location>
        <begin position="251"/>
        <end position="384"/>
    </location>
</feature>
<feature type="coiled-coil region" evidence="2">
    <location>
        <begin position="483"/>
        <end position="609"/>
    </location>
</feature>
<feature type="compositionally biased region" description="Basic and acidic residues" evidence="4">
    <location>
        <begin position="1"/>
        <end position="15"/>
    </location>
</feature>
<feature type="compositionally biased region" description="Polar residues" evidence="4">
    <location>
        <begin position="194"/>
        <end position="210"/>
    </location>
</feature>
<reference key="1">
    <citation type="journal article" date="2004" name="Nature">
        <title>Genome evolution in yeasts.</title>
        <authorList>
            <person name="Dujon B."/>
            <person name="Sherman D."/>
            <person name="Fischer G."/>
            <person name="Durrens P."/>
            <person name="Casaregola S."/>
            <person name="Lafontaine I."/>
            <person name="de Montigny J."/>
            <person name="Marck C."/>
            <person name="Neuveglise C."/>
            <person name="Talla E."/>
            <person name="Goffard N."/>
            <person name="Frangeul L."/>
            <person name="Aigle M."/>
            <person name="Anthouard V."/>
            <person name="Babour A."/>
            <person name="Barbe V."/>
            <person name="Barnay S."/>
            <person name="Blanchin S."/>
            <person name="Beckerich J.-M."/>
            <person name="Beyne E."/>
            <person name="Bleykasten C."/>
            <person name="Boisrame A."/>
            <person name="Boyer J."/>
            <person name="Cattolico L."/>
            <person name="Confanioleri F."/>
            <person name="de Daruvar A."/>
            <person name="Despons L."/>
            <person name="Fabre E."/>
            <person name="Fairhead C."/>
            <person name="Ferry-Dumazet H."/>
            <person name="Groppi A."/>
            <person name="Hantraye F."/>
            <person name="Hennequin C."/>
            <person name="Jauniaux N."/>
            <person name="Joyet P."/>
            <person name="Kachouri R."/>
            <person name="Kerrest A."/>
            <person name="Koszul R."/>
            <person name="Lemaire M."/>
            <person name="Lesur I."/>
            <person name="Ma L."/>
            <person name="Muller H."/>
            <person name="Nicaud J.-M."/>
            <person name="Nikolski M."/>
            <person name="Oztas S."/>
            <person name="Ozier-Kalogeropoulos O."/>
            <person name="Pellenz S."/>
            <person name="Potier S."/>
            <person name="Richard G.-F."/>
            <person name="Straub M.-L."/>
            <person name="Suleau A."/>
            <person name="Swennen D."/>
            <person name="Tekaia F."/>
            <person name="Wesolowski-Louvel M."/>
            <person name="Westhof E."/>
            <person name="Wirth B."/>
            <person name="Zeniou-Meyer M."/>
            <person name="Zivanovic Y."/>
            <person name="Bolotin-Fukuhara M."/>
            <person name="Thierry A."/>
            <person name="Bouchier C."/>
            <person name="Caudron B."/>
            <person name="Scarpelli C."/>
            <person name="Gaillardin C."/>
            <person name="Weissenbach J."/>
            <person name="Wincker P."/>
            <person name="Souciet J.-L."/>
        </authorList>
    </citation>
    <scope>NUCLEOTIDE SEQUENCE [LARGE SCALE GENOMIC DNA]</scope>
    <source>
        <strain>ATCC 2001 / BCRC 20586 / JCM 3761 / NBRC 0622 / NRRL Y-65 / CBS 138</strain>
    </source>
</reference>
<accession>Q6FWF3</accession>
<protein>
    <recommendedName>
        <fullName>E3 ubiquitin-protein ligase BRE1</fullName>
        <ecNumber evidence="1">2.3.2.27</ecNumber>
    </recommendedName>
    <alternativeName>
        <fullName evidence="5">RING-type E3 ubiquitin transferase BRE1</fullName>
    </alternativeName>
</protein>
<organism>
    <name type="scientific">Candida glabrata (strain ATCC 2001 / BCRC 20586 / JCM 3761 / NBRC 0622 / NRRL Y-65 / CBS 138)</name>
    <name type="common">Yeast</name>
    <name type="synonym">Nakaseomyces glabratus</name>
    <dbReference type="NCBI Taxonomy" id="284593"/>
    <lineage>
        <taxon>Eukaryota</taxon>
        <taxon>Fungi</taxon>
        <taxon>Dikarya</taxon>
        <taxon>Ascomycota</taxon>
        <taxon>Saccharomycotina</taxon>
        <taxon>Saccharomycetes</taxon>
        <taxon>Saccharomycetales</taxon>
        <taxon>Saccharomycetaceae</taxon>
        <taxon>Nakaseomyces</taxon>
    </lineage>
</organism>
<dbReference type="EC" id="2.3.2.27" evidence="1"/>
<dbReference type="EMBL" id="CR380950">
    <property type="protein sequence ID" value="CAG58352.1"/>
    <property type="molecule type" value="Genomic_DNA"/>
</dbReference>
<dbReference type="RefSeq" id="XP_445441.1">
    <property type="nucleotide sequence ID" value="XM_445441.1"/>
</dbReference>
<dbReference type="SMR" id="Q6FWF3"/>
<dbReference type="FunCoup" id="Q6FWF3">
    <property type="interactions" value="1003"/>
</dbReference>
<dbReference type="STRING" id="284593.Q6FWF3"/>
<dbReference type="EnsemblFungi" id="CAGL0D00638g-T">
    <property type="protein sequence ID" value="CAGL0D00638g-T-p1"/>
    <property type="gene ID" value="CAGL0D00638g"/>
</dbReference>
<dbReference type="KEGG" id="cgr:2887150"/>
<dbReference type="CGD" id="CAL0128055">
    <property type="gene designation" value="CAGL0D00638g"/>
</dbReference>
<dbReference type="VEuPathDB" id="FungiDB:CAGL0D00638g"/>
<dbReference type="eggNOG" id="KOG0978">
    <property type="taxonomic scope" value="Eukaryota"/>
</dbReference>
<dbReference type="HOGENOM" id="CLU_019713_1_0_1"/>
<dbReference type="InParanoid" id="Q6FWF3"/>
<dbReference type="OMA" id="ERHRACR"/>
<dbReference type="UniPathway" id="UPA00143"/>
<dbReference type="Proteomes" id="UP000002428">
    <property type="component" value="Chromosome D"/>
</dbReference>
<dbReference type="GO" id="GO:0000781">
    <property type="term" value="C:chromosome, telomeric region"/>
    <property type="evidence" value="ECO:0007669"/>
    <property type="project" value="GOC"/>
</dbReference>
<dbReference type="GO" id="GO:0033503">
    <property type="term" value="C:HULC complex"/>
    <property type="evidence" value="ECO:0007669"/>
    <property type="project" value="TreeGrafter"/>
</dbReference>
<dbReference type="GO" id="GO:0005634">
    <property type="term" value="C:nucleus"/>
    <property type="evidence" value="ECO:0007669"/>
    <property type="project" value="UniProtKB-SubCell"/>
</dbReference>
<dbReference type="GO" id="GO:0003688">
    <property type="term" value="F:DNA replication origin binding"/>
    <property type="evidence" value="ECO:0007669"/>
    <property type="project" value="EnsemblFungi"/>
</dbReference>
<dbReference type="GO" id="GO:0042802">
    <property type="term" value="F:identical protein binding"/>
    <property type="evidence" value="ECO:0007669"/>
    <property type="project" value="EnsemblFungi"/>
</dbReference>
<dbReference type="GO" id="GO:0097110">
    <property type="term" value="F:scaffold protein binding"/>
    <property type="evidence" value="ECO:0007669"/>
    <property type="project" value="EnsemblFungi"/>
</dbReference>
<dbReference type="GO" id="GO:0061630">
    <property type="term" value="F:ubiquitin protein ligase activity"/>
    <property type="evidence" value="ECO:0007669"/>
    <property type="project" value="EnsemblFungi"/>
</dbReference>
<dbReference type="GO" id="GO:0008270">
    <property type="term" value="F:zinc ion binding"/>
    <property type="evidence" value="ECO:0007669"/>
    <property type="project" value="UniProtKB-KW"/>
</dbReference>
<dbReference type="GO" id="GO:0000724">
    <property type="term" value="P:double-strand break repair via homologous recombination"/>
    <property type="evidence" value="ECO:0007669"/>
    <property type="project" value="EnsemblFungi"/>
</dbReference>
<dbReference type="GO" id="GO:0042138">
    <property type="term" value="P:meiotic DNA double-strand break formation"/>
    <property type="evidence" value="ECO:0007669"/>
    <property type="project" value="EnsemblFungi"/>
</dbReference>
<dbReference type="GO" id="GO:0031571">
    <property type="term" value="P:mitotic G1 DNA damage checkpoint signaling"/>
    <property type="evidence" value="ECO:0007669"/>
    <property type="project" value="EnsemblFungi"/>
</dbReference>
<dbReference type="GO" id="GO:0031573">
    <property type="term" value="P:mitotic intra-S DNA damage checkpoint signaling"/>
    <property type="evidence" value="ECO:0007669"/>
    <property type="project" value="EnsemblFungi"/>
</dbReference>
<dbReference type="GO" id="GO:0016567">
    <property type="term" value="P:protein ubiquitination"/>
    <property type="evidence" value="ECO:0007669"/>
    <property type="project" value="UniProtKB-UniPathway"/>
</dbReference>
<dbReference type="GO" id="GO:0030174">
    <property type="term" value="P:regulation of DNA-templated DNA replication initiation"/>
    <property type="evidence" value="ECO:0007669"/>
    <property type="project" value="EnsemblFungi"/>
</dbReference>
<dbReference type="GO" id="GO:0031509">
    <property type="term" value="P:subtelomeric heterochromatin formation"/>
    <property type="evidence" value="ECO:0007669"/>
    <property type="project" value="EnsemblFungi"/>
</dbReference>
<dbReference type="GO" id="GO:0000722">
    <property type="term" value="P:telomere maintenance via recombination"/>
    <property type="evidence" value="ECO:0007669"/>
    <property type="project" value="EnsemblFungi"/>
</dbReference>
<dbReference type="GO" id="GO:0006366">
    <property type="term" value="P:transcription by RNA polymerase II"/>
    <property type="evidence" value="ECO:0007669"/>
    <property type="project" value="EnsemblFungi"/>
</dbReference>
<dbReference type="CDD" id="cd16499">
    <property type="entry name" value="RING-HC_Bre1-like"/>
    <property type="match status" value="1"/>
</dbReference>
<dbReference type="FunFam" id="3.30.40.10:FF:000414">
    <property type="entry name" value="E3 ubiquitin protein ligase"/>
    <property type="match status" value="1"/>
</dbReference>
<dbReference type="Gene3D" id="3.30.40.10">
    <property type="entry name" value="Zinc/RING finger domain, C3HC4 (zinc finger)"/>
    <property type="match status" value="1"/>
</dbReference>
<dbReference type="InterPro" id="IPR013956">
    <property type="entry name" value="E3_ubiquit_lig_Bre1"/>
</dbReference>
<dbReference type="InterPro" id="IPR001841">
    <property type="entry name" value="Znf_RING"/>
</dbReference>
<dbReference type="InterPro" id="IPR013083">
    <property type="entry name" value="Znf_RING/FYVE/PHD"/>
</dbReference>
<dbReference type="PANTHER" id="PTHR23163:SF0">
    <property type="entry name" value="E3 UBIQUITIN-PROTEIN LIGASE BRE1"/>
    <property type="match status" value="1"/>
</dbReference>
<dbReference type="PANTHER" id="PTHR23163">
    <property type="entry name" value="RING FINGER PROTEIN-RELATED"/>
    <property type="match status" value="1"/>
</dbReference>
<dbReference type="Pfam" id="PF08647">
    <property type="entry name" value="BRE1"/>
    <property type="match status" value="1"/>
</dbReference>
<dbReference type="Pfam" id="PF13920">
    <property type="entry name" value="zf-C3HC4_3"/>
    <property type="match status" value="1"/>
</dbReference>
<dbReference type="SMART" id="SM00184">
    <property type="entry name" value="RING"/>
    <property type="match status" value="1"/>
</dbReference>
<dbReference type="SUPFAM" id="SSF57850">
    <property type="entry name" value="RING/U-box"/>
    <property type="match status" value="1"/>
</dbReference>
<dbReference type="PROSITE" id="PS50089">
    <property type="entry name" value="ZF_RING_2"/>
    <property type="match status" value="1"/>
</dbReference>